<gene>
    <name type="ordered locus">MT0764</name>
</gene>
<feature type="chain" id="PRO_0000427605" description="Uncharacterized protein MT0764">
    <location>
        <begin position="1"/>
        <end position="268"/>
    </location>
</feature>
<name>Y739_MYCTO</name>
<organism>
    <name type="scientific">Mycobacterium tuberculosis (strain CDC 1551 / Oshkosh)</name>
    <dbReference type="NCBI Taxonomy" id="83331"/>
    <lineage>
        <taxon>Bacteria</taxon>
        <taxon>Bacillati</taxon>
        <taxon>Actinomycetota</taxon>
        <taxon>Actinomycetes</taxon>
        <taxon>Mycobacteriales</taxon>
        <taxon>Mycobacteriaceae</taxon>
        <taxon>Mycobacterium</taxon>
        <taxon>Mycobacterium tuberculosis complex</taxon>
    </lineage>
</organism>
<proteinExistence type="predicted"/>
<keyword id="KW-1185">Reference proteome</keyword>
<accession>P9WKS0</accession>
<accession>L0T6C0</accession>
<accession>O53802</accession>
<protein>
    <recommendedName>
        <fullName>Uncharacterized protein MT0764</fullName>
    </recommendedName>
</protein>
<evidence type="ECO:0000305" key="1"/>
<comment type="similarity">
    <text evidence="1">To M.tuberculosis Rv0025 and Rv0026.</text>
</comment>
<reference key="1">
    <citation type="journal article" date="2002" name="J. Bacteriol.">
        <title>Whole-genome comparison of Mycobacterium tuberculosis clinical and laboratory strains.</title>
        <authorList>
            <person name="Fleischmann R.D."/>
            <person name="Alland D."/>
            <person name="Eisen J.A."/>
            <person name="Carpenter L."/>
            <person name="White O."/>
            <person name="Peterson J.D."/>
            <person name="DeBoy R.T."/>
            <person name="Dodson R.J."/>
            <person name="Gwinn M.L."/>
            <person name="Haft D.H."/>
            <person name="Hickey E.K."/>
            <person name="Kolonay J.F."/>
            <person name="Nelson W.C."/>
            <person name="Umayam L.A."/>
            <person name="Ermolaeva M.D."/>
            <person name="Salzberg S.L."/>
            <person name="Delcher A."/>
            <person name="Utterback T.R."/>
            <person name="Weidman J.F."/>
            <person name="Khouri H.M."/>
            <person name="Gill J."/>
            <person name="Mikula A."/>
            <person name="Bishai W."/>
            <person name="Jacobs W.R. Jr."/>
            <person name="Venter J.C."/>
            <person name="Fraser C.M."/>
        </authorList>
    </citation>
    <scope>NUCLEOTIDE SEQUENCE [LARGE SCALE GENOMIC DNA]</scope>
    <source>
        <strain>CDC 1551 / Oshkosh</strain>
    </source>
</reference>
<sequence>MVLTRRAREVALTQHIGVSAETDRAVVPKLRQAYDSLVCGRRRLGAIGAEIENAVAHQRALGLDTPAGARNFSRFLATKAHDITRVLAATAAESQAGAARLRSLASSYQAVGFGPKPQEPPPDPVPFPPYQPKVWAACRARGQDPDKVVRTFHHAPMSARFRSLPAGDSVLYCGNDKYGLLHIQAKHGRQWHDIADARWPSAGNWRYLADYAIGATLAYPERVEYNQDNDTFAVYRRMSLPDGRYVFTTRVIISARDGKIITAFPQTT</sequence>
<dbReference type="EMBL" id="AE000516">
    <property type="protein sequence ID" value="AAK44999.1"/>
    <property type="molecule type" value="Genomic_DNA"/>
</dbReference>
<dbReference type="PIR" id="F70823">
    <property type="entry name" value="F70823"/>
</dbReference>
<dbReference type="RefSeq" id="WP_003898568.1">
    <property type="nucleotide sequence ID" value="NZ_KK341227.1"/>
</dbReference>
<dbReference type="KEGG" id="mtc:MT0764"/>
<dbReference type="PATRIC" id="fig|83331.31.peg.819"/>
<dbReference type="HOGENOM" id="CLU_1068826_0_0_11"/>
<dbReference type="Proteomes" id="UP000001020">
    <property type="component" value="Chromosome"/>
</dbReference>
<dbReference type="InterPro" id="IPR019710">
    <property type="entry name" value="DUF4226"/>
</dbReference>
<dbReference type="Pfam" id="PF10774">
    <property type="entry name" value="DUF4226"/>
    <property type="match status" value="1"/>
</dbReference>